<evidence type="ECO:0000255" key="1">
    <source>
        <dbReference type="HAMAP-Rule" id="MF_01343"/>
    </source>
</evidence>
<evidence type="ECO:0000305" key="2"/>
<feature type="chain" id="PRO_1000054797" description="Small ribosomal subunit protein uS15">
    <location>
        <begin position="1"/>
        <end position="89"/>
    </location>
</feature>
<sequence length="89" mass="10439">MAISQAKKNEIIKQYARHEGDTGSTEVQVAVLTADINEINVHMQEHRKDFHSQRGLMKKIGHRRNLLAYLRKTDVQRYRELIKSLGLRR</sequence>
<comment type="function">
    <text evidence="1">One of the primary rRNA binding proteins, it binds directly to 16S rRNA where it helps nucleate assembly of the platform of the 30S subunit by binding and bridging several RNA helices of the 16S rRNA.</text>
</comment>
<comment type="function">
    <text evidence="1">Forms an intersubunit bridge (bridge B4) with the 23S rRNA of the 50S subunit in the ribosome.</text>
</comment>
<comment type="subunit">
    <text evidence="1">Part of the 30S ribosomal subunit. Forms a bridge to the 50S subunit in the 70S ribosome, contacting the 23S rRNA.</text>
</comment>
<comment type="similarity">
    <text evidence="1">Belongs to the universal ribosomal protein uS15 family.</text>
</comment>
<proteinExistence type="inferred from homology"/>
<keyword id="KW-1185">Reference proteome</keyword>
<keyword id="KW-0687">Ribonucleoprotein</keyword>
<keyword id="KW-0689">Ribosomal protein</keyword>
<keyword id="KW-0694">RNA-binding</keyword>
<keyword id="KW-0699">rRNA-binding</keyword>
<protein>
    <recommendedName>
        <fullName evidence="1">Small ribosomal subunit protein uS15</fullName>
    </recommendedName>
    <alternativeName>
        <fullName evidence="2">30S ribosomal protein S15</fullName>
    </alternativeName>
</protein>
<reference key="1">
    <citation type="journal article" date="2006" name="Proc. Natl. Acad. Sci. U.S.A.">
        <title>Comparative genomics of the lactic acid bacteria.</title>
        <authorList>
            <person name="Makarova K.S."/>
            <person name="Slesarev A."/>
            <person name="Wolf Y.I."/>
            <person name="Sorokin A."/>
            <person name="Mirkin B."/>
            <person name="Koonin E.V."/>
            <person name="Pavlov A."/>
            <person name="Pavlova N."/>
            <person name="Karamychev V."/>
            <person name="Polouchine N."/>
            <person name="Shakhova V."/>
            <person name="Grigoriev I."/>
            <person name="Lou Y."/>
            <person name="Rohksar D."/>
            <person name="Lucas S."/>
            <person name="Huang K."/>
            <person name="Goodstein D.M."/>
            <person name="Hawkins T."/>
            <person name="Plengvidhya V."/>
            <person name="Welker D."/>
            <person name="Hughes J."/>
            <person name="Goh Y."/>
            <person name="Benson A."/>
            <person name="Baldwin K."/>
            <person name="Lee J.-H."/>
            <person name="Diaz-Muniz I."/>
            <person name="Dosti B."/>
            <person name="Smeianov V."/>
            <person name="Wechter W."/>
            <person name="Barabote R."/>
            <person name="Lorca G."/>
            <person name="Altermann E."/>
            <person name="Barrangou R."/>
            <person name="Ganesan B."/>
            <person name="Xie Y."/>
            <person name="Rawsthorne H."/>
            <person name="Tamir D."/>
            <person name="Parker C."/>
            <person name="Breidt F."/>
            <person name="Broadbent J.R."/>
            <person name="Hutkins R."/>
            <person name="O'Sullivan D."/>
            <person name="Steele J."/>
            <person name="Unlu G."/>
            <person name="Saier M.H. Jr."/>
            <person name="Klaenhammer T."/>
            <person name="Richardson P."/>
            <person name="Kozyavkin S."/>
            <person name="Weimer B.C."/>
            <person name="Mills D.A."/>
        </authorList>
    </citation>
    <scope>NUCLEOTIDE SEQUENCE [LARGE SCALE GENOMIC DNA]</scope>
    <source>
        <strain>ATCC 367 / BCRC 12310 / CIP 105137 / JCM 1170 / LMG 11437 / NCIMB 947 / NCTC 947</strain>
    </source>
</reference>
<gene>
    <name evidence="1" type="primary">rpsO</name>
    <name type="ordered locus">LVIS_1392</name>
</gene>
<organism>
    <name type="scientific">Levilactobacillus brevis (strain ATCC 367 / BCRC 12310 / CIP 105137 / JCM 1170 / LMG 11437 / NCIMB 947 / NCTC 947)</name>
    <name type="common">Lactobacillus brevis</name>
    <dbReference type="NCBI Taxonomy" id="387344"/>
    <lineage>
        <taxon>Bacteria</taxon>
        <taxon>Bacillati</taxon>
        <taxon>Bacillota</taxon>
        <taxon>Bacilli</taxon>
        <taxon>Lactobacillales</taxon>
        <taxon>Lactobacillaceae</taxon>
        <taxon>Levilactobacillus</taxon>
    </lineage>
</organism>
<name>RS15_LEVBA</name>
<dbReference type="EMBL" id="CP000416">
    <property type="protein sequence ID" value="ABJ64490.1"/>
    <property type="molecule type" value="Genomic_DNA"/>
</dbReference>
<dbReference type="RefSeq" id="WP_011668063.1">
    <property type="nucleotide sequence ID" value="NC_008497.1"/>
</dbReference>
<dbReference type="SMR" id="Q03QN2"/>
<dbReference type="STRING" id="387344.LVIS_1392"/>
<dbReference type="GeneID" id="56993162"/>
<dbReference type="KEGG" id="lbr:LVIS_1392"/>
<dbReference type="eggNOG" id="COG0184">
    <property type="taxonomic scope" value="Bacteria"/>
</dbReference>
<dbReference type="HOGENOM" id="CLU_148518_0_0_9"/>
<dbReference type="Proteomes" id="UP000001652">
    <property type="component" value="Chromosome"/>
</dbReference>
<dbReference type="GO" id="GO:0022627">
    <property type="term" value="C:cytosolic small ribosomal subunit"/>
    <property type="evidence" value="ECO:0007669"/>
    <property type="project" value="TreeGrafter"/>
</dbReference>
<dbReference type="GO" id="GO:0019843">
    <property type="term" value="F:rRNA binding"/>
    <property type="evidence" value="ECO:0007669"/>
    <property type="project" value="UniProtKB-UniRule"/>
</dbReference>
<dbReference type="GO" id="GO:0003735">
    <property type="term" value="F:structural constituent of ribosome"/>
    <property type="evidence" value="ECO:0007669"/>
    <property type="project" value="InterPro"/>
</dbReference>
<dbReference type="GO" id="GO:0006412">
    <property type="term" value="P:translation"/>
    <property type="evidence" value="ECO:0007669"/>
    <property type="project" value="UniProtKB-UniRule"/>
</dbReference>
<dbReference type="CDD" id="cd00353">
    <property type="entry name" value="Ribosomal_S15p_S13e"/>
    <property type="match status" value="1"/>
</dbReference>
<dbReference type="FunFam" id="1.10.287.10:FF:000002">
    <property type="entry name" value="30S ribosomal protein S15"/>
    <property type="match status" value="1"/>
</dbReference>
<dbReference type="Gene3D" id="6.10.250.3130">
    <property type="match status" value="1"/>
</dbReference>
<dbReference type="Gene3D" id="1.10.287.10">
    <property type="entry name" value="S15/NS1, RNA-binding"/>
    <property type="match status" value="1"/>
</dbReference>
<dbReference type="HAMAP" id="MF_01343_B">
    <property type="entry name" value="Ribosomal_uS15_B"/>
    <property type="match status" value="1"/>
</dbReference>
<dbReference type="InterPro" id="IPR000589">
    <property type="entry name" value="Ribosomal_uS15"/>
</dbReference>
<dbReference type="InterPro" id="IPR005290">
    <property type="entry name" value="Ribosomal_uS15_bac-type"/>
</dbReference>
<dbReference type="InterPro" id="IPR009068">
    <property type="entry name" value="uS15_NS1_RNA-bd_sf"/>
</dbReference>
<dbReference type="NCBIfam" id="TIGR00952">
    <property type="entry name" value="S15_bact"/>
    <property type="match status" value="1"/>
</dbReference>
<dbReference type="PANTHER" id="PTHR23321">
    <property type="entry name" value="RIBOSOMAL PROTEIN S15, BACTERIAL AND ORGANELLAR"/>
    <property type="match status" value="1"/>
</dbReference>
<dbReference type="PANTHER" id="PTHR23321:SF26">
    <property type="entry name" value="SMALL RIBOSOMAL SUBUNIT PROTEIN US15M"/>
    <property type="match status" value="1"/>
</dbReference>
<dbReference type="Pfam" id="PF00312">
    <property type="entry name" value="Ribosomal_S15"/>
    <property type="match status" value="1"/>
</dbReference>
<dbReference type="SMART" id="SM01387">
    <property type="entry name" value="Ribosomal_S15"/>
    <property type="match status" value="1"/>
</dbReference>
<dbReference type="SUPFAM" id="SSF47060">
    <property type="entry name" value="S15/NS1 RNA-binding domain"/>
    <property type="match status" value="1"/>
</dbReference>
<dbReference type="PROSITE" id="PS00362">
    <property type="entry name" value="RIBOSOMAL_S15"/>
    <property type="match status" value="1"/>
</dbReference>
<accession>Q03QN2</accession>